<gene>
    <name type="primary">ASPM</name>
</gene>
<keyword id="KW-0112">Calmodulin-binding</keyword>
<keyword id="KW-0131">Cell cycle</keyword>
<keyword id="KW-0132">Cell division</keyword>
<keyword id="KW-0175">Coiled coil</keyword>
<keyword id="KW-0963">Cytoplasm</keyword>
<keyword id="KW-0206">Cytoskeleton</keyword>
<keyword id="KW-0498">Mitosis</keyword>
<keyword id="KW-0539">Nucleus</keyword>
<keyword id="KW-0597">Phosphoprotein</keyword>
<keyword id="KW-1185">Reference proteome</keyword>
<keyword id="KW-0677">Repeat</keyword>
<reference key="1">
    <citation type="journal article" date="2004" name="Hum. Mol. Genet.">
        <title>Adaptive evolution of ASPM, a major determinant of cerebral cortical size in humans.</title>
        <authorList>
            <person name="Evans P.D."/>
            <person name="Anderson J.R."/>
            <person name="Vallender E.J."/>
            <person name="Gilbert S.L."/>
            <person name="Malcom C.M."/>
            <person name="Dorus S."/>
            <person name="Lahn B.T."/>
        </authorList>
    </citation>
    <scope>NUCLEOTIDE SEQUENCE [MRNA]</scope>
</reference>
<dbReference type="EMBL" id="AY485418">
    <property type="protein sequence ID" value="AAR98739.1"/>
    <property type="molecule type" value="mRNA"/>
</dbReference>
<dbReference type="RefSeq" id="NP_001306293.1">
    <property type="nucleotide sequence ID" value="NM_001319364.1"/>
</dbReference>
<dbReference type="STRING" id="9541.ENSMFAP00000026278"/>
<dbReference type="eggNOG" id="KOG0165">
    <property type="taxonomic scope" value="Eukaryota"/>
</dbReference>
<dbReference type="Proteomes" id="UP000233100">
    <property type="component" value="Unplaced"/>
</dbReference>
<dbReference type="GO" id="GO:0005737">
    <property type="term" value="C:cytoplasm"/>
    <property type="evidence" value="ECO:0007669"/>
    <property type="project" value="UniProtKB-SubCell"/>
</dbReference>
<dbReference type="GO" id="GO:0005634">
    <property type="term" value="C:nucleus"/>
    <property type="evidence" value="ECO:0007669"/>
    <property type="project" value="UniProtKB-SubCell"/>
</dbReference>
<dbReference type="GO" id="GO:0000922">
    <property type="term" value="C:spindle pole"/>
    <property type="evidence" value="ECO:0007669"/>
    <property type="project" value="TreeGrafter"/>
</dbReference>
<dbReference type="GO" id="GO:0005516">
    <property type="term" value="F:calmodulin binding"/>
    <property type="evidence" value="ECO:0007669"/>
    <property type="project" value="UniProtKB-KW"/>
</dbReference>
<dbReference type="GO" id="GO:0051301">
    <property type="term" value="P:cell division"/>
    <property type="evidence" value="ECO:0007669"/>
    <property type="project" value="UniProtKB-KW"/>
</dbReference>
<dbReference type="GO" id="GO:0051295">
    <property type="term" value="P:establishment of meiotic spindle localization"/>
    <property type="evidence" value="ECO:0007669"/>
    <property type="project" value="TreeGrafter"/>
</dbReference>
<dbReference type="GO" id="GO:0000278">
    <property type="term" value="P:mitotic cell cycle"/>
    <property type="evidence" value="ECO:0007669"/>
    <property type="project" value="TreeGrafter"/>
</dbReference>
<dbReference type="GO" id="GO:0007051">
    <property type="term" value="P:spindle organization"/>
    <property type="evidence" value="ECO:0007669"/>
    <property type="project" value="TreeGrafter"/>
</dbReference>
<dbReference type="CDD" id="cd21223">
    <property type="entry name" value="CH_ASPM_rpt1"/>
    <property type="match status" value="1"/>
</dbReference>
<dbReference type="CDD" id="cd21224">
    <property type="entry name" value="CH_ASPM_rpt2"/>
    <property type="match status" value="1"/>
</dbReference>
<dbReference type="FunFam" id="1.20.5.190:FF:000052">
    <property type="entry name" value="Abnormal spindle-like microcephaly-associated protein"/>
    <property type="match status" value="1"/>
</dbReference>
<dbReference type="FunFam" id="1.10.418.10:FF:000051">
    <property type="entry name" value="Abnormal spindle-like microcephaly-associated protein homolog"/>
    <property type="match status" value="1"/>
</dbReference>
<dbReference type="FunFam" id="1.20.5.190:FF:000008">
    <property type="entry name" value="Abnormal spindle-like microcephaly-associated protein homolog"/>
    <property type="match status" value="5"/>
</dbReference>
<dbReference type="FunFam" id="1.20.5.190:FF:000009">
    <property type="entry name" value="Abnormal spindle-like microcephaly-associated protein homolog"/>
    <property type="match status" value="4"/>
</dbReference>
<dbReference type="FunFam" id="1.20.5.190:FF:000010">
    <property type="entry name" value="Abnormal spindle-like microcephaly-associated protein homolog"/>
    <property type="match status" value="2"/>
</dbReference>
<dbReference type="FunFam" id="1.20.5.190:FF:000016">
    <property type="entry name" value="Abnormal spindle-like microcephaly-associated protein homolog"/>
    <property type="match status" value="1"/>
</dbReference>
<dbReference type="FunFam" id="1.20.5.190:FF:000023">
    <property type="entry name" value="Abnormal spindle-like microcephaly-associated protein homolog"/>
    <property type="match status" value="1"/>
</dbReference>
<dbReference type="FunFam" id="1.20.5.190:FF:000028">
    <property type="entry name" value="Abnormal spindle-like microcephaly-associated protein homolog"/>
    <property type="match status" value="1"/>
</dbReference>
<dbReference type="FunFam" id="1.20.5.190:FF:000029">
    <property type="entry name" value="Abnormal spindle-like microcephaly-associated protein homolog"/>
    <property type="match status" value="1"/>
</dbReference>
<dbReference type="FunFam" id="1.20.5.190:FF:000030">
    <property type="entry name" value="Abnormal spindle-like microcephaly-associated protein homolog"/>
    <property type="match status" value="1"/>
</dbReference>
<dbReference type="FunFam" id="1.20.5.190:FF:000031">
    <property type="entry name" value="Abnormal spindle-like microcephaly-associated protein homolog"/>
    <property type="match status" value="1"/>
</dbReference>
<dbReference type="FunFam" id="1.20.5.190:FF:000032">
    <property type="entry name" value="Abnormal spindle-like microcephaly-associated protein homolog"/>
    <property type="match status" value="1"/>
</dbReference>
<dbReference type="FunFam" id="1.20.5.190:FF:000034">
    <property type="entry name" value="Abnormal spindle-like microcephaly-associated protein homolog"/>
    <property type="match status" value="1"/>
</dbReference>
<dbReference type="FunFam" id="1.20.5.190:FF:000035">
    <property type="entry name" value="Abnormal spindle-like microcephaly-associated protein homolog"/>
    <property type="match status" value="1"/>
</dbReference>
<dbReference type="FunFam" id="1.20.5.190:FF:000046">
    <property type="entry name" value="Abnormal spindle-like microcephaly-associated protein homolog"/>
    <property type="match status" value="1"/>
</dbReference>
<dbReference type="FunFam" id="1.20.5.190:FF:000053">
    <property type="entry name" value="Abnormal spindle-like microcephaly-associated protein homolog"/>
    <property type="match status" value="1"/>
</dbReference>
<dbReference type="FunFam" id="1.20.5.190:FF:000059">
    <property type="entry name" value="Abnormal spindle-like microcephaly-associated protein homolog"/>
    <property type="match status" value="1"/>
</dbReference>
<dbReference type="FunFam" id="2.60.40.10:FF:001429">
    <property type="entry name" value="Abnormal spindle-like microcephaly-associated protein homolog"/>
    <property type="match status" value="1"/>
</dbReference>
<dbReference type="Gene3D" id="1.20.5.190">
    <property type="match status" value="33"/>
</dbReference>
<dbReference type="Gene3D" id="1.10.418.10">
    <property type="entry name" value="Calponin-like domain"/>
    <property type="match status" value="2"/>
</dbReference>
<dbReference type="Gene3D" id="2.60.40.10">
    <property type="entry name" value="Immunoglobulins"/>
    <property type="match status" value="1"/>
</dbReference>
<dbReference type="Gene3D" id="1.25.10.10">
    <property type="entry name" value="Leucine-rich Repeat Variant"/>
    <property type="match status" value="1"/>
</dbReference>
<dbReference type="InterPro" id="IPR011989">
    <property type="entry name" value="ARM-like"/>
</dbReference>
<dbReference type="InterPro" id="IPR016024">
    <property type="entry name" value="ARM-type_fold"/>
</dbReference>
<dbReference type="InterPro" id="IPR031549">
    <property type="entry name" value="ASH"/>
</dbReference>
<dbReference type="InterPro" id="IPR051185">
    <property type="entry name" value="ASPM"/>
</dbReference>
<dbReference type="InterPro" id="IPR001715">
    <property type="entry name" value="CH_dom"/>
</dbReference>
<dbReference type="InterPro" id="IPR036872">
    <property type="entry name" value="CH_dom_sf"/>
</dbReference>
<dbReference type="InterPro" id="IPR013783">
    <property type="entry name" value="Ig-like_fold"/>
</dbReference>
<dbReference type="InterPro" id="IPR000048">
    <property type="entry name" value="IQ_motif_EF-hand-BS"/>
</dbReference>
<dbReference type="InterPro" id="IPR027417">
    <property type="entry name" value="P-loop_NTPase"/>
</dbReference>
<dbReference type="PANTHER" id="PTHR22706">
    <property type="entry name" value="ASSEMBLY FACTOR FOR SPINDLE MICROTUBULES"/>
    <property type="match status" value="1"/>
</dbReference>
<dbReference type="PANTHER" id="PTHR22706:SF1">
    <property type="entry name" value="ASSEMBLY FACTOR FOR SPINDLE MICROTUBULES"/>
    <property type="match status" value="1"/>
</dbReference>
<dbReference type="Pfam" id="PF15780">
    <property type="entry name" value="ASH"/>
    <property type="match status" value="1"/>
</dbReference>
<dbReference type="Pfam" id="PF00307">
    <property type="entry name" value="CH"/>
    <property type="match status" value="1"/>
</dbReference>
<dbReference type="Pfam" id="PF00612">
    <property type="entry name" value="IQ"/>
    <property type="match status" value="41"/>
</dbReference>
<dbReference type="SMART" id="SM00033">
    <property type="entry name" value="CH"/>
    <property type="match status" value="1"/>
</dbReference>
<dbReference type="SMART" id="SM00015">
    <property type="entry name" value="IQ"/>
    <property type="match status" value="66"/>
</dbReference>
<dbReference type="SUPFAM" id="SSF48371">
    <property type="entry name" value="ARM repeat"/>
    <property type="match status" value="1"/>
</dbReference>
<dbReference type="SUPFAM" id="SSF47576">
    <property type="entry name" value="Calponin-homology domain, CH-domain"/>
    <property type="match status" value="1"/>
</dbReference>
<dbReference type="SUPFAM" id="SSF52540">
    <property type="entry name" value="P-loop containing nucleoside triphosphate hydrolases"/>
    <property type="match status" value="17"/>
</dbReference>
<dbReference type="PROSITE" id="PS50021">
    <property type="entry name" value="CH"/>
    <property type="match status" value="2"/>
</dbReference>
<dbReference type="PROSITE" id="PS50096">
    <property type="entry name" value="IQ"/>
    <property type="match status" value="38"/>
</dbReference>
<organism>
    <name type="scientific">Macaca fascicularis</name>
    <name type="common">Crab-eating macaque</name>
    <name type="synonym">Cynomolgus monkey</name>
    <dbReference type="NCBI Taxonomy" id="9541"/>
    <lineage>
        <taxon>Eukaryota</taxon>
        <taxon>Metazoa</taxon>
        <taxon>Chordata</taxon>
        <taxon>Craniata</taxon>
        <taxon>Vertebrata</taxon>
        <taxon>Euteleostomi</taxon>
        <taxon>Mammalia</taxon>
        <taxon>Eutheria</taxon>
        <taxon>Euarchontoglires</taxon>
        <taxon>Primates</taxon>
        <taxon>Haplorrhini</taxon>
        <taxon>Catarrhini</taxon>
        <taxon>Cercopithecidae</taxon>
        <taxon>Cercopithecinae</taxon>
        <taxon>Macaca</taxon>
    </lineage>
</organism>
<protein>
    <recommendedName>
        <fullName>Abnormal spindle-like microcephaly-associated protein homolog</fullName>
    </recommendedName>
</protein>
<name>ASPM_MACFA</name>
<accession>P62291</accession>
<evidence type="ECO:0000250" key="1"/>
<evidence type="ECO:0000250" key="2">
    <source>
        <dbReference type="UniProtKB" id="Q8IZT6"/>
    </source>
</evidence>
<evidence type="ECO:0000255" key="3"/>
<evidence type="ECO:0000255" key="4">
    <source>
        <dbReference type="PROSITE-ProRule" id="PRU00044"/>
    </source>
</evidence>
<evidence type="ECO:0000255" key="5">
    <source>
        <dbReference type="PROSITE-ProRule" id="PRU00116"/>
    </source>
</evidence>
<evidence type="ECO:0000256" key="6">
    <source>
        <dbReference type="SAM" id="MobiDB-lite"/>
    </source>
</evidence>
<sequence length="3476" mass="409426">MANRRVGRGCWEVSPTERRPPAGLRGPATEEEASSPPVLSLSHFCRSPFLCFGDVLLGDSRTLPLALDNPNEEVAEVKISHFPAADLGFSVSQRCFVLQPKEKIVISVNWTPFKEGRVREIMTFLVNDVLKHQAILLGNAEKQKKKKRSLWDTIKKKKISASTSHNRRVSNIQNVNKTFSVSQKVDRVRSPLQACENLAMNEGGPPTENNSLTLEENKIPISPISPAFNECHGATCLPLSVRRSTTYSSLHASENRELLNVDSANVSKVSFNEKAVTETSFNSINVNDQSGENSKLILTPNYSSTLNITQSQINFLSPDSFVNNSHGANNELELVTCLSSDMFMTDNSKPVPLQSTIAHEIYQKILSPDSFIKDNYGLNQDLESESVNPILSPNQFLKDNMAYMCTSQQTYKVPLSNENSQVPQSPQDWSKSEVSPCIPEYQGSKSPKAIFEELVEMKSNYYSFIKQNNPKFSAVQDISSHSHDKQPKRRPILSATVTKRKPTCTRENQTEINKPKAKRCLNSAVGEHEKVIHNQKEKEDFHSYLPVIDPVLSKSKSYKNQIMPSLTTASVARKRKSDGSMEDANVRVAVTEHTEEREIKRIHFSPSEPKTSAVKKTKNVITPISKCISNREKLNLKKKTDLLIFKTPISKTSKRTKPIIAVAQSNLTFIKPLKTDIPRHPMPFAAKNMFYDERWKEKQEQGFTWWLNFILTPDDFTVKTNISEVNAATLLLGVENQHKISVPRAPTKEEMSLRAYTARCRLNRLRRAACRLFTSEKMVKAIKKLEIEIEARRLIVRKDRHLWKDVGERQKVLNWLLSYNPLWLRIGLETIYGELISLEDNSDVTGLAMFILNRLLWNPDIAAEYRHPTVPHLYRDGHEGALSKFTLKKLLLLICFLDYAKISXLIDHDPCLFCKDAEFKASKEILLAFSRDFLSGEGDLSRHLGLLGLPVNHVQTPFDEFDFAITNLAVDLQCGVRLVRTMELLTQNWNLSKKLRIPAISRLQKMHNVDIVLQVLKSRGIELSDEHGNTILSKDIVDRHREKTLRLLWKIAFAFQVDISLNLDQLKEEIAFLKHTKSIKKTISLLSCHSDALINKKKGKRDSGSFEQYSENIKLLMDWVNAVCAFYNKKVENFTVSFSDGRVLCYLIHHYHPCYVPXDAICQRTTQTVECTQTGSVVLNSSSESDDSSLDMSLKAFDHENTSELYKELLENEKKNFQLIRSAVRDLGGIPAMINHSDMSNTIPDEKVVITYLSFLCARLLDLRKEIRAARLIQTTWRKYKLKTDLKRHQERDKAARIIQSAVINFLAKQRLRKRVNAALIIQKYWRRVLAQRKLLILKKEKLEKVQNKAASLIQGYWRRYSTRKRFLKLKYYSIILQSRIRMIIAVTSYKRYLWATVTIQRHWRAYLRRKQDQQRYEMLKSSSLIIQSMFRKWKRRKMQSQVKATVILQRAFREWHLRKRAKEENSAIVIQSWYRMHKELRKYIYIRSCVIVIQKRFRCFQAQKLYKRKKESILTIQKYYKAYLKGKIERTNYLQKRAAAIQLQAAFRRLKAHNLCRQIRAACVIQSYWRMRQDRVRFLNLKKTIIKLQAHIRKHQQVQKYKKMKKAAVIIQTHFRAYIFTRKVLASYQKTRSAVIVLQSAYRGMQARKVYIHILTSVIKIQSYYRAYVSKKEFLSLKNTTIKLQSIVKMKQTRKQYLHLRAAALFIQQCYRSKKITTQKREEYMQMRESCIKLQAFVRGYLVRKQMRLQRKAVISLQSYFRMRKARQYYLKMCKAIIVIQNYYHAYKAQVNQRKNFLRVKKAATCLQAAYRGYKVRQLIKQQSIAALKIQSAFRGYNKRVKYQSVLQSIIKIQRWYRAYKTLHDTRTRFLKTKAAVVSLQSAYRGWKVRKQIRREHQAALKIQSAFRMAKAQKQFRLFKTAALVIQQNFRAWTAGRKQRMEYIELRHAVLILQSMWKGKTLRRQLQRQXKCAIIIQSYYRMHVQQKKWKIMKKAALLIQKYYKAYSIGREQHHLYLKTKAAVVTLQSAYRGMKVRKRIKDCNKAAVTIQSKYRAYKTKKKYATYRASAIIIQRWYRGIKITHXXHQEYLNLKKTAIKIQSVYRGIRVRRHIQHMHRAATFIKAMFKMHQSRISYHTMRKAAIVIQVRFRAYYQGKMHREKYLTILKAVKILQASFRGVXVRWTLRKMQIAATLIQSNYRRYKQQTYFNKLKKITKTIQQRYRAVKERNIQFKRYNKLRHSVIYIQAIFRGKKARRHLKMMHVAATLIQRRFRTLMMRRRFLSLKKTAVWIQRKYRAHLCTKHHLQFLQVQNAVIKIQSSYRRWMIRKKMREMHRAATFIQATFRMHRVHMRYQALKQASVVIQQQYXANRAAKLQRQHYLRQRRSAVILQAAFRGVKTRRHLKSMHSSATLIQSRFRSLLVRRRFISLKKATIFVQRKYRATICAKHKLHQFLQLRKAAITIQSSYRRLMVKKKLQEMQRAAVLIQATFRMHRTCVTFQTWKQASILIQQHYRTYRAAKLQKENYIRQWHSAVVIQTAYKGMKARQHLREKHKAAIIIQSTYRMYRQYCFYQKLQWATKIIQEKYRANKKKQKALQHNELKKETCVQASFQDMNIQKQIQEQHQAAIIIQKHCKAFKIRKHYLHLRATVVSIQRRYRKLTAVRTQAVICIQSYYRGFKVRRDIQNMHRAATLIQSFYRMHRAKVDYQTKKTAIVVIQNYYRLYVRVKTERKSFLPVQKSVRTIQAAFRGMKVRQKLKIVSEEKMAAIVNQSALCCYRSKTQYEAVQSEGVMIQEWYKASDLACSQEAECHSQSRAAVTIQNAFRRMVTRKLETQKCAALRIQFFLQMAVYRRRFVQQKRAAITLQHYFRTWQTRKQFLLYRKAAVVLQNHYRAFLSAKHQRQVYLQIRSSVIIIQARSKGFIQKRKFQEIKNSTIKIQAMWRRYRAKKYLCKVKAACKIQAWYRCWRAHKEYLAILKAVKIIQGCFYTKLERTWFLNVRASAIIIQRKWRAILSAKIAHEHFLMIKRHRAACLIQAHYRGYKERQVFLRQKSAALIIQKYIRAREAGKRERIKYIEFKKSTVILQALVRGWLVRKRILEQKTKIRLLHFTAAAYYHLNALRIQRAYKLYLAVKNANKQVNSVICIQRWFRARLQQKKFIQKYSIKKIEHEGQECLSQQNRAASVIQKAVRHFVLRKKQEKFTSGIIKIQALWRGYSWRKKNDCTKIKAIRLSLQVVNREIREENKLYKRTALALHYLLTYKHLSAILEALKHLEVVTRLSPLCCENMAQSGAISKIFVLIRSCNRSVPCMEVIRYAVQVLLNVSKYEKTTSAVYDVENCIDTLLELLQIYREKPGNKVADKGGSIFTKTCCLLAVLLKTTNRASDVRSRSKVVDRIYSLYKLTAHKHKMNTERILHKQKKNSSISIPFIPXTPVRTRIVSRLKPDWVLRRDNMEEITNPLQAIQMVMDTLGIPY</sequence>
<proteinExistence type="evidence at transcript level"/>
<comment type="function">
    <text evidence="1">Probable role in mitotic spindle regulation and coordination of mitotic processes. May have a preferential role in regulating neurogenesis (By similarity).</text>
</comment>
<comment type="subcellular location">
    <subcellularLocation>
        <location evidence="1">Cytoplasm</location>
    </subcellularLocation>
    <subcellularLocation>
        <location evidence="1">Cytoplasm</location>
        <location evidence="1">Cytoskeleton</location>
        <location evidence="1">Spindle</location>
    </subcellularLocation>
    <subcellularLocation>
        <location evidence="1">Nucleus</location>
    </subcellularLocation>
    <text evidence="1">The nuclear-cytoplasmic distribution could be regulated by the availability of calmodulin. Localizes to spindle poles during mitosis (By similarity).</text>
</comment>
<feature type="chain" id="PRO_0000191334" description="Abnormal spindle-like microcephaly-associated protein homolog">
    <location>
        <begin position="1"/>
        <end position="3476"/>
    </location>
</feature>
<feature type="domain" description="Calponin-homology (CH) 1" evidence="4">
    <location>
        <begin position="920"/>
        <end position="1056"/>
    </location>
</feature>
<feature type="domain" description="Calponin-homology (CH) 2" evidence="4">
    <location>
        <begin position="1110"/>
        <end position="1261"/>
    </location>
</feature>
<feature type="domain" description="IQ 1" evidence="5">
    <location>
        <begin position="1347"/>
        <end position="1378"/>
    </location>
</feature>
<feature type="domain" description="IQ 2" evidence="5">
    <location>
        <begin position="1393"/>
        <end position="1422"/>
    </location>
</feature>
<feature type="domain" description="IQ 3" evidence="5">
    <location>
        <begin position="1582"/>
        <end position="1613"/>
    </location>
</feature>
<feature type="domain" description="IQ 4" evidence="5">
    <location>
        <begin position="1605"/>
        <end position="1634"/>
    </location>
</feature>
<feature type="domain" description="IQ 5" evidence="5">
    <location>
        <begin position="1632"/>
        <end position="1661"/>
    </location>
</feature>
<feature type="domain" description="IQ 6" evidence="5">
    <location>
        <begin position="1655"/>
        <end position="1684"/>
    </location>
</feature>
<feature type="domain" description="IQ 7" evidence="5">
    <location>
        <begin position="1728"/>
        <end position="1757"/>
    </location>
</feature>
<feature type="domain" description="IQ 8" evidence="5">
    <location>
        <begin position="1751"/>
        <end position="1782"/>
    </location>
</feature>
<feature type="domain" description="IQ 9" evidence="5">
    <location>
        <begin position="1801"/>
        <end position="1830"/>
    </location>
</feature>
<feature type="domain" description="IQ 10" evidence="5">
    <location>
        <begin position="1824"/>
        <end position="1853"/>
    </location>
</feature>
<feature type="domain" description="IQ 11" evidence="5">
    <location>
        <begin position="1874"/>
        <end position="1903"/>
    </location>
</feature>
<feature type="domain" description="IQ 12" evidence="5">
    <location>
        <begin position="1897"/>
        <end position="1928"/>
    </location>
</feature>
<feature type="domain" description="IQ 13" evidence="5">
    <location>
        <begin position="1947"/>
        <end position="1978"/>
    </location>
</feature>
<feature type="domain" description="IQ 14" evidence="5">
    <location>
        <begin position="1970"/>
        <end position="2001"/>
    </location>
</feature>
<feature type="domain" description="IQ 15" evidence="5">
    <location>
        <begin position="2020"/>
        <end position="2049"/>
    </location>
</feature>
<feature type="domain" description="IQ 16" evidence="5">
    <location>
        <begin position="2043"/>
        <end position="2074"/>
    </location>
</feature>
<feature type="domain" description="IQ 17" evidence="5">
    <location>
        <begin position="2093"/>
        <end position="2124"/>
    </location>
</feature>
<feature type="domain" description="IQ 18" evidence="5">
    <location>
        <begin position="2116"/>
        <end position="2147"/>
    </location>
</feature>
<feature type="domain" description="IQ 19" evidence="5">
    <location>
        <begin position="2239"/>
        <end position="2270"/>
    </location>
</feature>
<feature type="domain" description="IQ 20" evidence="5">
    <location>
        <begin position="2262"/>
        <end position="2293"/>
    </location>
</feature>
<feature type="domain" description="IQ 21" evidence="5">
    <location>
        <begin position="2311"/>
        <end position="2342"/>
    </location>
</feature>
<feature type="domain" description="IQ 22" evidence="5">
    <location>
        <begin position="2334"/>
        <end position="2365"/>
    </location>
</feature>
<feature type="domain" description="IQ 23" evidence="5">
    <location>
        <begin position="2384"/>
        <end position="2415"/>
    </location>
</feature>
<feature type="domain" description="IQ 24" evidence="5">
    <location>
        <begin position="2407"/>
        <end position="2438"/>
    </location>
</feature>
<feature type="domain" description="IQ 25" evidence="5">
    <location>
        <begin position="2457"/>
        <end position="2488"/>
    </location>
</feature>
<feature type="domain" description="IQ 26" evidence="5">
    <location>
        <begin position="2530"/>
        <end position="2561"/>
    </location>
</feature>
<feature type="domain" description="IQ 27" evidence="5">
    <location>
        <begin position="2624"/>
        <end position="2653"/>
    </location>
</feature>
<feature type="domain" description="IQ 28" evidence="5">
    <location>
        <begin position="2665"/>
        <end position="2696"/>
    </location>
</feature>
<feature type="domain" description="IQ 29" evidence="5">
    <location>
        <begin position="2688"/>
        <end position="2719"/>
    </location>
</feature>
<feature type="domain" description="IQ 30" evidence="5">
    <location>
        <begin position="2738"/>
        <end position="2767"/>
    </location>
</feature>
<feature type="domain" description="IQ 31" evidence="5">
    <location>
        <begin position="2814"/>
        <end position="2845"/>
    </location>
</feature>
<feature type="domain" description="IQ 32" evidence="5">
    <location>
        <begin position="2859"/>
        <end position="2890"/>
    </location>
</feature>
<feature type="domain" description="IQ 33" evidence="5">
    <location>
        <begin position="2909"/>
        <end position="2938"/>
    </location>
</feature>
<feature type="domain" description="IQ 34" evidence="5">
    <location>
        <begin position="2932"/>
        <end position="2963"/>
    </location>
</feature>
<feature type="domain" description="IQ 35" evidence="5">
    <location>
        <begin position="2954"/>
        <end position="2985"/>
    </location>
</feature>
<feature type="domain" description="IQ 36" evidence="5">
    <location>
        <begin position="3029"/>
        <end position="3060"/>
    </location>
</feature>
<feature type="domain" description="IQ 37" evidence="5">
    <location>
        <begin position="3079"/>
        <end position="3110"/>
    </location>
</feature>
<feature type="domain" description="IQ 38" evidence="5">
    <location>
        <begin position="3203"/>
        <end position="3234"/>
    </location>
</feature>
<feature type="region of interest" description="Disordered" evidence="6">
    <location>
        <begin position="1"/>
        <end position="34"/>
    </location>
</feature>
<feature type="coiled-coil region" evidence="3">
    <location>
        <begin position="1057"/>
        <end position="1078"/>
    </location>
</feature>
<feature type="modified residue" description="Phosphoserine" evidence="2">
    <location>
        <position position="280"/>
    </location>
</feature>
<feature type="modified residue" description="Phosphoserine" evidence="2">
    <location>
        <position position="283"/>
    </location>
</feature>
<feature type="modified residue" description="Phosphoserine" evidence="2">
    <location>
        <position position="367"/>
    </location>
</feature>
<feature type="modified residue" description="Phosphoserine" evidence="2">
    <location>
        <position position="392"/>
    </location>
</feature>
<feature type="modified residue" description="Phosphoserine" evidence="2">
    <location>
        <position position="425"/>
    </location>
</feature>
<feature type="modified residue" description="Phosphoserine" evidence="2">
    <location>
        <position position="605"/>
    </location>
</feature>
<feature type="modified residue" description="Phosphoserine" evidence="2">
    <location>
        <position position="1103"/>
    </location>
</feature>